<organism>
    <name type="scientific">Escherichia coli O6:H1 (strain CFT073 / ATCC 700928 / UPEC)</name>
    <dbReference type="NCBI Taxonomy" id="199310"/>
    <lineage>
        <taxon>Bacteria</taxon>
        <taxon>Pseudomonadati</taxon>
        <taxon>Pseudomonadota</taxon>
        <taxon>Gammaproteobacteria</taxon>
        <taxon>Enterobacterales</taxon>
        <taxon>Enterobacteriaceae</taxon>
        <taxon>Escherichia</taxon>
    </lineage>
</organism>
<reference key="1">
    <citation type="journal article" date="2002" name="Proc. Natl. Acad. Sci. U.S.A.">
        <title>Extensive mosaic structure revealed by the complete genome sequence of uropathogenic Escherichia coli.</title>
        <authorList>
            <person name="Welch R.A."/>
            <person name="Burland V."/>
            <person name="Plunkett G. III"/>
            <person name="Redford P."/>
            <person name="Roesch P."/>
            <person name="Rasko D."/>
            <person name="Buckles E.L."/>
            <person name="Liou S.-R."/>
            <person name="Boutin A."/>
            <person name="Hackett J."/>
            <person name="Stroud D."/>
            <person name="Mayhew G.F."/>
            <person name="Rose D.J."/>
            <person name="Zhou S."/>
            <person name="Schwartz D.C."/>
            <person name="Perna N.T."/>
            <person name="Mobley H.L.T."/>
            <person name="Donnenberg M.S."/>
            <person name="Blattner F.R."/>
        </authorList>
    </citation>
    <scope>NUCLEOTIDE SEQUENCE [LARGE SCALE GENOMIC DNA]</scope>
    <source>
        <strain>CFT073 / ATCC 700928 / UPEC</strain>
    </source>
</reference>
<protein>
    <recommendedName>
        <fullName>Lipopolysaccharide export system ATP-binding protein LptB</fullName>
        <ecNumber>7.5.2.-</ecNumber>
    </recommendedName>
</protein>
<name>LPTB_ECOL6</name>
<evidence type="ECO:0000250" key="1"/>
<evidence type="ECO:0000255" key="2">
    <source>
        <dbReference type="PROSITE-ProRule" id="PRU00434"/>
    </source>
</evidence>
<evidence type="ECO:0000305" key="3"/>
<gene>
    <name type="primary">lptB</name>
    <name type="ordered locus">c3961</name>
</gene>
<keyword id="KW-0067">ATP-binding</keyword>
<keyword id="KW-0997">Cell inner membrane</keyword>
<keyword id="KW-1003">Cell membrane</keyword>
<keyword id="KW-0963">Cytoplasm</keyword>
<keyword id="KW-0472">Membrane</keyword>
<keyword id="KW-0547">Nucleotide-binding</keyword>
<keyword id="KW-1185">Reference proteome</keyword>
<keyword id="KW-1278">Translocase</keyword>
<keyword id="KW-0813">Transport</keyword>
<proteinExistence type="inferred from homology"/>
<feature type="initiator methionine" description="Removed" evidence="1">
    <location>
        <position position="1"/>
    </location>
</feature>
<feature type="chain" id="PRO_0000093180" description="Lipopolysaccharide export system ATP-binding protein LptB">
    <location>
        <begin position="2"/>
        <end position="241"/>
    </location>
</feature>
<feature type="domain" description="ABC transporter" evidence="2">
    <location>
        <begin position="4"/>
        <end position="237"/>
    </location>
</feature>
<feature type="binding site" evidence="2">
    <location>
        <begin position="36"/>
        <end position="43"/>
    </location>
    <ligand>
        <name>ATP</name>
        <dbReference type="ChEBI" id="CHEBI:30616"/>
    </ligand>
</feature>
<comment type="function">
    <text evidence="1">Part of the ABC transporter complex LptBFG involved in the translocation of lipopolysaccharide (LPS) from the inner membrane to the outer membrane. Probably responsible for energy coupling to the transport system (By similarity).</text>
</comment>
<comment type="subunit">
    <text evidence="1">Component of the lipopolysaccharide transport and assembly complex. The LptBFG transporter is composed of two ATP-binding proteins (LptB) and two transmembrane proteins (LptF and LptG) (By similarity).</text>
</comment>
<comment type="subcellular location">
    <subcellularLocation>
        <location>Cytoplasm</location>
    </subcellularLocation>
    <subcellularLocation>
        <location evidence="1">Cell inner membrane</location>
        <topology evidence="1">Peripheral membrane protein</topology>
        <orientation evidence="1">Cytoplasmic side</orientation>
    </subcellularLocation>
</comment>
<comment type="similarity">
    <text evidence="3">Belongs to the ABC transporter superfamily. Outer membrane lipopolysaccharide export (TC 1.B.42) family.</text>
</comment>
<dbReference type="EC" id="7.5.2.-"/>
<dbReference type="EMBL" id="AE014075">
    <property type="protein sequence ID" value="AAN82401.1"/>
    <property type="molecule type" value="Genomic_DNA"/>
</dbReference>
<dbReference type="RefSeq" id="WP_000224099.1">
    <property type="nucleotide sequence ID" value="NZ_CP051263.1"/>
</dbReference>
<dbReference type="SMR" id="P0A9V2"/>
<dbReference type="STRING" id="199310.c3961"/>
<dbReference type="GeneID" id="93778780"/>
<dbReference type="KEGG" id="ecc:c3961"/>
<dbReference type="eggNOG" id="COG1137">
    <property type="taxonomic scope" value="Bacteria"/>
</dbReference>
<dbReference type="HOGENOM" id="CLU_000604_1_2_6"/>
<dbReference type="BioCyc" id="ECOL199310:C3961-MONOMER"/>
<dbReference type="Proteomes" id="UP000001410">
    <property type="component" value="Chromosome"/>
</dbReference>
<dbReference type="GO" id="GO:0043190">
    <property type="term" value="C:ATP-binding cassette (ABC) transporter complex"/>
    <property type="evidence" value="ECO:0007669"/>
    <property type="project" value="InterPro"/>
</dbReference>
<dbReference type="GO" id="GO:0005737">
    <property type="term" value="C:cytoplasm"/>
    <property type="evidence" value="ECO:0007669"/>
    <property type="project" value="UniProtKB-SubCell"/>
</dbReference>
<dbReference type="GO" id="GO:0005524">
    <property type="term" value="F:ATP binding"/>
    <property type="evidence" value="ECO:0007669"/>
    <property type="project" value="UniProtKB-KW"/>
</dbReference>
<dbReference type="GO" id="GO:0016887">
    <property type="term" value="F:ATP hydrolysis activity"/>
    <property type="evidence" value="ECO:0007669"/>
    <property type="project" value="InterPro"/>
</dbReference>
<dbReference type="GO" id="GO:0055085">
    <property type="term" value="P:transmembrane transport"/>
    <property type="evidence" value="ECO:0007669"/>
    <property type="project" value="InterPro"/>
</dbReference>
<dbReference type="CDD" id="cd03218">
    <property type="entry name" value="ABC_YhbG"/>
    <property type="match status" value="1"/>
</dbReference>
<dbReference type="FunFam" id="3.40.50.300:FF:000151">
    <property type="entry name" value="Lipopolysaccharide ABC transporter ATP-binding protein"/>
    <property type="match status" value="1"/>
</dbReference>
<dbReference type="Gene3D" id="3.40.50.300">
    <property type="entry name" value="P-loop containing nucleotide triphosphate hydrolases"/>
    <property type="match status" value="1"/>
</dbReference>
<dbReference type="InterPro" id="IPR003593">
    <property type="entry name" value="AAA+_ATPase"/>
</dbReference>
<dbReference type="InterPro" id="IPR051120">
    <property type="entry name" value="ABC_AA/LPS_Transport"/>
</dbReference>
<dbReference type="InterPro" id="IPR003439">
    <property type="entry name" value="ABC_transporter-like_ATP-bd"/>
</dbReference>
<dbReference type="InterPro" id="IPR017871">
    <property type="entry name" value="ABC_transporter-like_CS"/>
</dbReference>
<dbReference type="InterPro" id="IPR032823">
    <property type="entry name" value="BCA_ABC_TP_C"/>
</dbReference>
<dbReference type="InterPro" id="IPR030921">
    <property type="entry name" value="LPS_export_LptB"/>
</dbReference>
<dbReference type="InterPro" id="IPR027417">
    <property type="entry name" value="P-loop_NTPase"/>
</dbReference>
<dbReference type="NCBIfam" id="TIGR04406">
    <property type="entry name" value="LPS_export_lptB"/>
    <property type="match status" value="1"/>
</dbReference>
<dbReference type="NCBIfam" id="NF008144">
    <property type="entry name" value="PRK10895.1"/>
    <property type="match status" value="1"/>
</dbReference>
<dbReference type="PANTHER" id="PTHR45772">
    <property type="entry name" value="CONSERVED COMPONENT OF ABC TRANSPORTER FOR NATURAL AMINO ACIDS-RELATED"/>
    <property type="match status" value="1"/>
</dbReference>
<dbReference type="PANTHER" id="PTHR45772:SF10">
    <property type="entry name" value="LIPOPOLYSACCHARIDE EXPORT SYSTEM ATP-BINDING PROTEIN LPTB"/>
    <property type="match status" value="1"/>
</dbReference>
<dbReference type="Pfam" id="PF00005">
    <property type="entry name" value="ABC_tran"/>
    <property type="match status" value="1"/>
</dbReference>
<dbReference type="Pfam" id="PF12399">
    <property type="entry name" value="BCA_ABC_TP_C"/>
    <property type="match status" value="1"/>
</dbReference>
<dbReference type="SMART" id="SM00382">
    <property type="entry name" value="AAA"/>
    <property type="match status" value="1"/>
</dbReference>
<dbReference type="SUPFAM" id="SSF52540">
    <property type="entry name" value="P-loop containing nucleoside triphosphate hydrolases"/>
    <property type="match status" value="1"/>
</dbReference>
<dbReference type="PROSITE" id="PS00211">
    <property type="entry name" value="ABC_TRANSPORTER_1"/>
    <property type="match status" value="1"/>
</dbReference>
<dbReference type="PROSITE" id="PS50893">
    <property type="entry name" value="ABC_TRANSPORTER_2"/>
    <property type="match status" value="1"/>
</dbReference>
<accession>P0A9V2</accession>
<accession>P31220</accession>
<sequence length="241" mass="26801">MATLTAKNLAKAYKGRRVVEDVSLTVNSGEIVGLLGPNGAGKTTTFYMVVGIVPRDAGNIIIDDDDISLLPLHARARRGIGYLPQEASIFRRLSVYDNLMAVLQIRDDLSAEQREDRANELMEEFHIEHLRDSMGQSLSGGERRRVEIARALAANPKFILLDEPFAGVDPISVIDIKRIIEHLRDSGLGVLITDHNVRETLAVCERAYIVSQGHLIAHGTPTEILQDEHVKRVYLGEDFRL</sequence>